<name>CATJ_MOUSE</name>
<accession>Q9R014</accession>
<accession>Q564D9</accession>
<accession>Q91XK6</accession>
<accession>Q9WV51</accession>
<protein>
    <recommendedName>
        <fullName>Cathepsin J</fullName>
        <ecNumber>3.4.22.-</ecNumber>
    </recommendedName>
    <alternativeName>
        <fullName>Cathepsin L-related protein</fullName>
    </alternativeName>
    <alternativeName>
        <fullName>Cathepsin P</fullName>
    </alternativeName>
    <alternativeName>
        <fullName>Catlrp-p</fullName>
    </alternativeName>
</protein>
<sequence length="334" mass="37276">MTPTVLLLILCFGVASGAQAHDPKLDAEWKDWKTKYAKSYSPKEEALRRAVWEENMRMIKLHNKENSLGKNNFTMKMNKFGDQTSEEFRKSIDNIPIPAAMTDPHAQNHVSIGLPDYKDWREEGYVTPVRNQGKCGSCWAFAAAGAIEGQMFWKTGNLTPLSVQNLLDCSKTVGNKGCQSGTAHQAFEYVLKNKGLEAEATYPYEGKDGPCRYRSENASANITDYVNLPPNELYLWVAVASIGPVSAAIDASHDSFRFYNGGIYYEPNCSSYFVNHAVLVVGYGSEGDVKDGNNYWLIKNSWGEEWGMNGYMQIAKDHNNHCGIASLASYPNIF</sequence>
<comment type="subcellular location">
    <subcellularLocation>
        <location evidence="8">Lysosome</location>
    </subcellularLocation>
</comment>
<comment type="tissue specificity">
    <text evidence="6">Expressed specifically in placenta.</text>
</comment>
<comment type="similarity">
    <text evidence="3 4 5">Belongs to the peptidase C1 family.</text>
</comment>
<organism>
    <name type="scientific">Mus musculus</name>
    <name type="common">Mouse</name>
    <dbReference type="NCBI Taxonomy" id="10090"/>
    <lineage>
        <taxon>Eukaryota</taxon>
        <taxon>Metazoa</taxon>
        <taxon>Chordata</taxon>
        <taxon>Craniata</taxon>
        <taxon>Vertebrata</taxon>
        <taxon>Euteleostomi</taxon>
        <taxon>Mammalia</taxon>
        <taxon>Eutheria</taxon>
        <taxon>Euarchontoglires</taxon>
        <taxon>Glires</taxon>
        <taxon>Rodentia</taxon>
        <taxon>Myomorpha</taxon>
        <taxon>Muroidea</taxon>
        <taxon>Muridae</taxon>
        <taxon>Murinae</taxon>
        <taxon>Mus</taxon>
        <taxon>Mus</taxon>
    </lineage>
</organism>
<proteinExistence type="evidence at transcript level"/>
<dbReference type="EC" id="3.4.22.-"/>
<dbReference type="EMBL" id="AF136272">
    <property type="protein sequence ID" value="AAF13142.1"/>
    <property type="molecule type" value="mRNA"/>
</dbReference>
<dbReference type="EMBL" id="AF158182">
    <property type="protein sequence ID" value="AAD41898.1"/>
    <property type="molecule type" value="mRNA"/>
</dbReference>
<dbReference type="EMBL" id="AY034579">
    <property type="protein sequence ID" value="AAK58455.1"/>
    <property type="molecule type" value="Genomic_DNA"/>
</dbReference>
<dbReference type="EMBL" id="AK005526">
    <property type="protein sequence ID" value="BAB24099.1"/>
    <property type="molecule type" value="mRNA"/>
</dbReference>
<dbReference type="EMBL" id="AK131661">
    <property type="protein sequence ID" value="BAE20748.1"/>
    <property type="molecule type" value="mRNA"/>
</dbReference>
<dbReference type="EMBL" id="BC103769">
    <property type="protein sequence ID" value="AAI03770.1"/>
    <property type="molecule type" value="mRNA"/>
</dbReference>
<dbReference type="CCDS" id="CCDS88467.1"/>
<dbReference type="RefSeq" id="NP_001343220.1">
    <property type="nucleotide sequence ID" value="NM_001356291.1"/>
</dbReference>
<dbReference type="RefSeq" id="NP_036137.1">
    <property type="nucleotide sequence ID" value="NM_012007.1"/>
</dbReference>
<dbReference type="RefSeq" id="XP_006517318.1">
    <property type="nucleotide sequence ID" value="XM_006517255.1"/>
</dbReference>
<dbReference type="SMR" id="Q9R014"/>
<dbReference type="FunCoup" id="Q9R014">
    <property type="interactions" value="149"/>
</dbReference>
<dbReference type="STRING" id="10090.ENSMUSP00000071457"/>
<dbReference type="MEROPS" id="C01.038"/>
<dbReference type="GlyCosmos" id="Q9R014">
    <property type="glycosylation" value="4 sites, No reported glycans"/>
</dbReference>
<dbReference type="GlyGen" id="Q9R014">
    <property type="glycosylation" value="4 sites"/>
</dbReference>
<dbReference type="PaxDb" id="10090-ENSMUSP00000071457"/>
<dbReference type="PeptideAtlas" id="Q9R014"/>
<dbReference type="ProteomicsDB" id="279920"/>
<dbReference type="DNASU" id="26898"/>
<dbReference type="Ensembl" id="ENSMUST00000224224.2">
    <property type="protein sequence ID" value="ENSMUSP00000153389.2"/>
    <property type="gene ID" value="ENSMUSG00000055298.7"/>
</dbReference>
<dbReference type="GeneID" id="26898"/>
<dbReference type="KEGG" id="mmu:26898"/>
<dbReference type="UCSC" id="uc007qwa.1">
    <property type="organism name" value="mouse"/>
</dbReference>
<dbReference type="AGR" id="MGI:1349426"/>
<dbReference type="CTD" id="26898"/>
<dbReference type="MGI" id="MGI:1349426">
    <property type="gene designation" value="Ctsj"/>
</dbReference>
<dbReference type="VEuPathDB" id="HostDB:ENSMUSG00000055298"/>
<dbReference type="eggNOG" id="KOG1543">
    <property type="taxonomic scope" value="Eukaryota"/>
</dbReference>
<dbReference type="GeneTree" id="ENSGT00940000153321"/>
<dbReference type="InParanoid" id="Q9R014"/>
<dbReference type="OMA" id="CCACFFA"/>
<dbReference type="OrthoDB" id="10253408at2759"/>
<dbReference type="PhylomeDB" id="Q9R014"/>
<dbReference type="TreeFam" id="TF313739"/>
<dbReference type="BRENDA" id="3.4.22.B65">
    <property type="organism ID" value="3474"/>
</dbReference>
<dbReference type="BioGRID-ORCS" id="26898">
    <property type="hits" value="0 hits in 61 CRISPR screens"/>
</dbReference>
<dbReference type="PRO" id="PR:Q9R014"/>
<dbReference type="Proteomes" id="UP000000589">
    <property type="component" value="Chromosome 13"/>
</dbReference>
<dbReference type="RNAct" id="Q9R014">
    <property type="molecule type" value="protein"/>
</dbReference>
<dbReference type="Bgee" id="ENSMUSG00000055298">
    <property type="expression patterns" value="Expressed in placenta labyrinth and 9 other cell types or tissues"/>
</dbReference>
<dbReference type="ExpressionAtlas" id="Q9R014">
    <property type="expression patterns" value="baseline and differential"/>
</dbReference>
<dbReference type="GO" id="GO:0005764">
    <property type="term" value="C:lysosome"/>
    <property type="evidence" value="ECO:0007669"/>
    <property type="project" value="UniProtKB-SubCell"/>
</dbReference>
<dbReference type="GO" id="GO:0048471">
    <property type="term" value="C:perinuclear region of cytoplasm"/>
    <property type="evidence" value="ECO:0007669"/>
    <property type="project" value="Ensembl"/>
</dbReference>
<dbReference type="GO" id="GO:0008234">
    <property type="term" value="F:cysteine-type peptidase activity"/>
    <property type="evidence" value="ECO:0000266"/>
    <property type="project" value="MGI"/>
</dbReference>
<dbReference type="GO" id="GO:0004175">
    <property type="term" value="F:endopeptidase activity"/>
    <property type="evidence" value="ECO:0007669"/>
    <property type="project" value="UniProtKB-ARBA"/>
</dbReference>
<dbReference type="GO" id="GO:0006508">
    <property type="term" value="P:proteolysis"/>
    <property type="evidence" value="ECO:0007669"/>
    <property type="project" value="UniProtKB-KW"/>
</dbReference>
<dbReference type="CDD" id="cd02248">
    <property type="entry name" value="Peptidase_C1A"/>
    <property type="match status" value="1"/>
</dbReference>
<dbReference type="FunFam" id="1.10.287.2250:FF:000003">
    <property type="entry name" value="Cathepsin L"/>
    <property type="match status" value="1"/>
</dbReference>
<dbReference type="FunFam" id="3.90.70.10:FF:000006">
    <property type="entry name" value="Cathepsin S"/>
    <property type="match status" value="1"/>
</dbReference>
<dbReference type="Gene3D" id="3.90.70.10">
    <property type="entry name" value="Cysteine proteinases"/>
    <property type="match status" value="1"/>
</dbReference>
<dbReference type="InterPro" id="IPR038765">
    <property type="entry name" value="Papain-like_cys_pep_sf"/>
</dbReference>
<dbReference type="InterPro" id="IPR025661">
    <property type="entry name" value="Pept_asp_AS"/>
</dbReference>
<dbReference type="InterPro" id="IPR000169">
    <property type="entry name" value="Pept_cys_AS"/>
</dbReference>
<dbReference type="InterPro" id="IPR025660">
    <property type="entry name" value="Pept_his_AS"/>
</dbReference>
<dbReference type="InterPro" id="IPR013128">
    <property type="entry name" value="Peptidase_C1A"/>
</dbReference>
<dbReference type="InterPro" id="IPR000668">
    <property type="entry name" value="Peptidase_C1A_C"/>
</dbReference>
<dbReference type="InterPro" id="IPR039417">
    <property type="entry name" value="Peptidase_C1A_papain-like"/>
</dbReference>
<dbReference type="InterPro" id="IPR013201">
    <property type="entry name" value="Prot_inhib_I29"/>
</dbReference>
<dbReference type="PANTHER" id="PTHR12411">
    <property type="entry name" value="CYSTEINE PROTEASE FAMILY C1-RELATED"/>
    <property type="match status" value="1"/>
</dbReference>
<dbReference type="Pfam" id="PF08246">
    <property type="entry name" value="Inhibitor_I29"/>
    <property type="match status" value="1"/>
</dbReference>
<dbReference type="Pfam" id="PF00112">
    <property type="entry name" value="Peptidase_C1"/>
    <property type="match status" value="1"/>
</dbReference>
<dbReference type="PRINTS" id="PR00705">
    <property type="entry name" value="PAPAIN"/>
</dbReference>
<dbReference type="SMART" id="SM00848">
    <property type="entry name" value="Inhibitor_I29"/>
    <property type="match status" value="1"/>
</dbReference>
<dbReference type="SMART" id="SM00645">
    <property type="entry name" value="Pept_C1"/>
    <property type="match status" value="1"/>
</dbReference>
<dbReference type="SUPFAM" id="SSF54001">
    <property type="entry name" value="Cysteine proteinases"/>
    <property type="match status" value="1"/>
</dbReference>
<dbReference type="PROSITE" id="PS00640">
    <property type="entry name" value="THIOL_PROTEASE_ASN"/>
    <property type="match status" value="1"/>
</dbReference>
<dbReference type="PROSITE" id="PS00139">
    <property type="entry name" value="THIOL_PROTEASE_CYS"/>
    <property type="match status" value="1"/>
</dbReference>
<dbReference type="PROSITE" id="PS00639">
    <property type="entry name" value="THIOL_PROTEASE_HIS"/>
    <property type="match status" value="1"/>
</dbReference>
<evidence type="ECO:0000250" key="1"/>
<evidence type="ECO:0000255" key="2"/>
<evidence type="ECO:0000255" key="3">
    <source>
        <dbReference type="PROSITE-ProRule" id="PRU10088"/>
    </source>
</evidence>
<evidence type="ECO:0000255" key="4">
    <source>
        <dbReference type="PROSITE-ProRule" id="PRU10089"/>
    </source>
</evidence>
<evidence type="ECO:0000255" key="5">
    <source>
        <dbReference type="PROSITE-ProRule" id="PRU10090"/>
    </source>
</evidence>
<evidence type="ECO:0000269" key="6">
    <source>
    </source>
</evidence>
<evidence type="ECO:0000269" key="7">
    <source>
    </source>
</evidence>
<evidence type="ECO:0000305" key="8"/>
<feature type="signal peptide" evidence="2">
    <location>
        <begin position="1"/>
        <end position="17"/>
    </location>
</feature>
<feature type="propeptide" id="PRO_0000026230" description="Activation peptide">
    <location>
        <begin position="18"/>
        <end position="113"/>
    </location>
</feature>
<feature type="chain" id="PRO_0000026231" description="Cathepsin J">
    <location>
        <begin position="114"/>
        <end position="334"/>
    </location>
</feature>
<feature type="active site" evidence="1">
    <location>
        <position position="138"/>
    </location>
</feature>
<feature type="active site" evidence="1">
    <location>
        <position position="276"/>
    </location>
</feature>
<feature type="active site" evidence="1">
    <location>
        <position position="300"/>
    </location>
</feature>
<feature type="glycosylation site" description="N-linked (GlcNAc...) asparagine" evidence="2">
    <location>
        <position position="72"/>
    </location>
</feature>
<feature type="glycosylation site" description="N-linked (GlcNAc...) asparagine" evidence="2">
    <location>
        <position position="217"/>
    </location>
</feature>
<feature type="glycosylation site" description="N-linked (GlcNAc...) asparagine" evidence="2">
    <location>
        <position position="221"/>
    </location>
</feature>
<feature type="glycosylation site" description="N-linked (GlcNAc...) asparagine" evidence="2">
    <location>
        <position position="268"/>
    </location>
</feature>
<feature type="disulfide bond" evidence="1">
    <location>
        <begin position="135"/>
        <end position="178"/>
    </location>
</feature>
<feature type="disulfide bond" evidence="1">
    <location>
        <begin position="169"/>
        <end position="211"/>
    </location>
</feature>
<feature type="disulfide bond" evidence="1">
    <location>
        <begin position="269"/>
        <end position="322"/>
    </location>
</feature>
<feature type="sequence variant" evidence="6 7">
    <location>
        <position position="43"/>
    </location>
</feature>
<keyword id="KW-1015">Disulfide bond</keyword>
<keyword id="KW-0325">Glycoprotein</keyword>
<keyword id="KW-0378">Hydrolase</keyword>
<keyword id="KW-0458">Lysosome</keyword>
<keyword id="KW-0645">Protease</keyword>
<keyword id="KW-1185">Reference proteome</keyword>
<keyword id="KW-0732">Signal</keyword>
<keyword id="KW-0788">Thiol protease</keyword>
<keyword id="KW-0865">Zymogen</keyword>
<reference key="1">
    <citation type="journal article" date="1999" name="FEBS Lett.">
        <title>Cathepsin J, a novel murine cysteine protease of the papain family with a placenta-restricted expression.</title>
        <authorList>
            <person name="Tisljar K."/>
            <person name="Deussing J."/>
            <person name="Peters C."/>
        </authorList>
    </citation>
    <scope>NUCLEOTIDE SEQUENCE [MRNA]</scope>
    <scope>TISSUE SPECIFICITY</scope>
    <scope>VARIANT LYS-43 DEL</scope>
    <source>
        <strain>C57BL/6J</strain>
        <tissue>Embryo</tissue>
    </source>
</reference>
<reference key="2">
    <citation type="submission" date="1999-06" db="EMBL/GenBank/DDBJ databases">
        <title>Cloning of a mouse cysteine protease.</title>
        <authorList>
            <person name="Sol-Church K."/>
            <person name="Frenck J."/>
            <person name="Troeber D."/>
            <person name="Mason R.W."/>
        </authorList>
    </citation>
    <scope>NUCLEOTIDE SEQUENCE [MRNA]</scope>
    <source>
        <strain>C57BL/6J</strain>
        <tissue>Placenta</tissue>
    </source>
</reference>
<reference key="3">
    <citation type="journal article" date="2002" name="Genomics">
        <title>Identification and characterization of a dense cluster of placenta-specific cysteine peptidase genes and related genes on mouse chromosome 13.</title>
        <authorList>
            <person name="Deussing J."/>
            <person name="Kouadio M."/>
            <person name="Rehman S."/>
            <person name="Werber I."/>
            <person name="Schwinde A."/>
            <person name="Peters C."/>
        </authorList>
    </citation>
    <scope>NUCLEOTIDE SEQUENCE [GENOMIC DNA]</scope>
    <scope>VARIANT LYS-43 DEL</scope>
    <source>
        <strain>129/SvEvTacfBr</strain>
    </source>
</reference>
<reference key="4">
    <citation type="journal article" date="2005" name="Science">
        <title>The transcriptional landscape of the mammalian genome.</title>
        <authorList>
            <person name="Carninci P."/>
            <person name="Kasukawa T."/>
            <person name="Katayama S."/>
            <person name="Gough J."/>
            <person name="Frith M.C."/>
            <person name="Maeda N."/>
            <person name="Oyama R."/>
            <person name="Ravasi T."/>
            <person name="Lenhard B."/>
            <person name="Wells C."/>
            <person name="Kodzius R."/>
            <person name="Shimokawa K."/>
            <person name="Bajic V.B."/>
            <person name="Brenner S.E."/>
            <person name="Batalov S."/>
            <person name="Forrest A.R."/>
            <person name="Zavolan M."/>
            <person name="Davis M.J."/>
            <person name="Wilming L.G."/>
            <person name="Aidinis V."/>
            <person name="Allen J.E."/>
            <person name="Ambesi-Impiombato A."/>
            <person name="Apweiler R."/>
            <person name="Aturaliya R.N."/>
            <person name="Bailey T.L."/>
            <person name="Bansal M."/>
            <person name="Baxter L."/>
            <person name="Beisel K.W."/>
            <person name="Bersano T."/>
            <person name="Bono H."/>
            <person name="Chalk A.M."/>
            <person name="Chiu K.P."/>
            <person name="Choudhary V."/>
            <person name="Christoffels A."/>
            <person name="Clutterbuck D.R."/>
            <person name="Crowe M.L."/>
            <person name="Dalla E."/>
            <person name="Dalrymple B.P."/>
            <person name="de Bono B."/>
            <person name="Della Gatta G."/>
            <person name="di Bernardo D."/>
            <person name="Down T."/>
            <person name="Engstrom P."/>
            <person name="Fagiolini M."/>
            <person name="Faulkner G."/>
            <person name="Fletcher C.F."/>
            <person name="Fukushima T."/>
            <person name="Furuno M."/>
            <person name="Futaki S."/>
            <person name="Gariboldi M."/>
            <person name="Georgii-Hemming P."/>
            <person name="Gingeras T.R."/>
            <person name="Gojobori T."/>
            <person name="Green R.E."/>
            <person name="Gustincich S."/>
            <person name="Harbers M."/>
            <person name="Hayashi Y."/>
            <person name="Hensch T.K."/>
            <person name="Hirokawa N."/>
            <person name="Hill D."/>
            <person name="Huminiecki L."/>
            <person name="Iacono M."/>
            <person name="Ikeo K."/>
            <person name="Iwama A."/>
            <person name="Ishikawa T."/>
            <person name="Jakt M."/>
            <person name="Kanapin A."/>
            <person name="Katoh M."/>
            <person name="Kawasawa Y."/>
            <person name="Kelso J."/>
            <person name="Kitamura H."/>
            <person name="Kitano H."/>
            <person name="Kollias G."/>
            <person name="Krishnan S.P."/>
            <person name="Kruger A."/>
            <person name="Kummerfeld S.K."/>
            <person name="Kurochkin I.V."/>
            <person name="Lareau L.F."/>
            <person name="Lazarevic D."/>
            <person name="Lipovich L."/>
            <person name="Liu J."/>
            <person name="Liuni S."/>
            <person name="McWilliam S."/>
            <person name="Madan Babu M."/>
            <person name="Madera M."/>
            <person name="Marchionni L."/>
            <person name="Matsuda H."/>
            <person name="Matsuzawa S."/>
            <person name="Miki H."/>
            <person name="Mignone F."/>
            <person name="Miyake S."/>
            <person name="Morris K."/>
            <person name="Mottagui-Tabar S."/>
            <person name="Mulder N."/>
            <person name="Nakano N."/>
            <person name="Nakauchi H."/>
            <person name="Ng P."/>
            <person name="Nilsson R."/>
            <person name="Nishiguchi S."/>
            <person name="Nishikawa S."/>
            <person name="Nori F."/>
            <person name="Ohara O."/>
            <person name="Okazaki Y."/>
            <person name="Orlando V."/>
            <person name="Pang K.C."/>
            <person name="Pavan W.J."/>
            <person name="Pavesi G."/>
            <person name="Pesole G."/>
            <person name="Petrovsky N."/>
            <person name="Piazza S."/>
            <person name="Reed J."/>
            <person name="Reid J.F."/>
            <person name="Ring B.Z."/>
            <person name="Ringwald M."/>
            <person name="Rost B."/>
            <person name="Ruan Y."/>
            <person name="Salzberg S.L."/>
            <person name="Sandelin A."/>
            <person name="Schneider C."/>
            <person name="Schoenbach C."/>
            <person name="Sekiguchi K."/>
            <person name="Semple C.A."/>
            <person name="Seno S."/>
            <person name="Sessa L."/>
            <person name="Sheng Y."/>
            <person name="Shibata Y."/>
            <person name="Shimada H."/>
            <person name="Shimada K."/>
            <person name="Silva D."/>
            <person name="Sinclair B."/>
            <person name="Sperling S."/>
            <person name="Stupka E."/>
            <person name="Sugiura K."/>
            <person name="Sultana R."/>
            <person name="Takenaka Y."/>
            <person name="Taki K."/>
            <person name="Tammoja K."/>
            <person name="Tan S.L."/>
            <person name="Tang S."/>
            <person name="Taylor M.S."/>
            <person name="Tegner J."/>
            <person name="Teichmann S.A."/>
            <person name="Ueda H.R."/>
            <person name="van Nimwegen E."/>
            <person name="Verardo R."/>
            <person name="Wei C.L."/>
            <person name="Yagi K."/>
            <person name="Yamanishi H."/>
            <person name="Zabarovsky E."/>
            <person name="Zhu S."/>
            <person name="Zimmer A."/>
            <person name="Hide W."/>
            <person name="Bult C."/>
            <person name="Grimmond S.M."/>
            <person name="Teasdale R.D."/>
            <person name="Liu E.T."/>
            <person name="Brusic V."/>
            <person name="Quackenbush J."/>
            <person name="Wahlestedt C."/>
            <person name="Mattick J.S."/>
            <person name="Hume D.A."/>
            <person name="Kai C."/>
            <person name="Sasaki D."/>
            <person name="Tomaru Y."/>
            <person name="Fukuda S."/>
            <person name="Kanamori-Katayama M."/>
            <person name="Suzuki M."/>
            <person name="Aoki J."/>
            <person name="Arakawa T."/>
            <person name="Iida J."/>
            <person name="Imamura K."/>
            <person name="Itoh M."/>
            <person name="Kato T."/>
            <person name="Kawaji H."/>
            <person name="Kawagashira N."/>
            <person name="Kawashima T."/>
            <person name="Kojima M."/>
            <person name="Kondo S."/>
            <person name="Konno H."/>
            <person name="Nakano K."/>
            <person name="Ninomiya N."/>
            <person name="Nishio T."/>
            <person name="Okada M."/>
            <person name="Plessy C."/>
            <person name="Shibata K."/>
            <person name="Shiraki T."/>
            <person name="Suzuki S."/>
            <person name="Tagami M."/>
            <person name="Waki K."/>
            <person name="Watahiki A."/>
            <person name="Okamura-Oho Y."/>
            <person name="Suzuki H."/>
            <person name="Kawai J."/>
            <person name="Hayashizaki Y."/>
        </authorList>
    </citation>
    <scope>NUCLEOTIDE SEQUENCE [LARGE SCALE MRNA]</scope>
    <source>
        <tissue>Placenta</tissue>
    </source>
</reference>
<reference key="5">
    <citation type="journal article" date="2004" name="Genome Res.">
        <title>The status, quality, and expansion of the NIH full-length cDNA project: the Mammalian Gene Collection (MGC).</title>
        <authorList>
            <consortium name="The MGC Project Team"/>
        </authorList>
    </citation>
    <scope>NUCLEOTIDE SEQUENCE [LARGE SCALE MRNA]</scope>
    <source>
        <strain>C57BL/6J</strain>
        <tissue>Placenta</tissue>
    </source>
</reference>
<gene>
    <name type="primary">Ctsj</name>
    <name type="synonym">Ctsp</name>
</gene>